<dbReference type="EMBL" id="CP000951">
    <property type="protein sequence ID" value="ACA99880.1"/>
    <property type="molecule type" value="Genomic_DNA"/>
</dbReference>
<dbReference type="RefSeq" id="WP_012307503.1">
    <property type="nucleotide sequence ID" value="NZ_JAHHPU010000002.1"/>
</dbReference>
<dbReference type="SMR" id="B1XQI5"/>
<dbReference type="STRING" id="32049.SYNPCC7002_A1893"/>
<dbReference type="KEGG" id="syp:SYNPCC7002_A1893"/>
<dbReference type="eggNOG" id="COG0333">
    <property type="taxonomic scope" value="Bacteria"/>
</dbReference>
<dbReference type="HOGENOM" id="CLU_199882_0_0_3"/>
<dbReference type="Proteomes" id="UP000001688">
    <property type="component" value="Chromosome"/>
</dbReference>
<dbReference type="GO" id="GO:0015934">
    <property type="term" value="C:large ribosomal subunit"/>
    <property type="evidence" value="ECO:0007669"/>
    <property type="project" value="InterPro"/>
</dbReference>
<dbReference type="GO" id="GO:0003735">
    <property type="term" value="F:structural constituent of ribosome"/>
    <property type="evidence" value="ECO:0007669"/>
    <property type="project" value="InterPro"/>
</dbReference>
<dbReference type="GO" id="GO:0006412">
    <property type="term" value="P:translation"/>
    <property type="evidence" value="ECO:0007669"/>
    <property type="project" value="UniProtKB-UniRule"/>
</dbReference>
<dbReference type="Gene3D" id="1.20.5.640">
    <property type="entry name" value="Single helix bin"/>
    <property type="match status" value="1"/>
</dbReference>
<dbReference type="HAMAP" id="MF_00340">
    <property type="entry name" value="Ribosomal_bL32"/>
    <property type="match status" value="1"/>
</dbReference>
<dbReference type="InterPro" id="IPR002677">
    <property type="entry name" value="Ribosomal_bL32"/>
</dbReference>
<dbReference type="InterPro" id="IPR044958">
    <property type="entry name" value="Ribosomal_bL32_plant/cyanobact"/>
</dbReference>
<dbReference type="InterPro" id="IPR011332">
    <property type="entry name" value="Ribosomal_zn-bd"/>
</dbReference>
<dbReference type="NCBIfam" id="TIGR01031">
    <property type="entry name" value="rpmF_bact"/>
    <property type="match status" value="1"/>
</dbReference>
<dbReference type="PANTHER" id="PTHR36083">
    <property type="entry name" value="50S RIBOSOMAL PROTEIN L32, CHLOROPLASTIC"/>
    <property type="match status" value="1"/>
</dbReference>
<dbReference type="PANTHER" id="PTHR36083:SF1">
    <property type="entry name" value="LARGE RIBOSOMAL SUBUNIT PROTEIN BL32C"/>
    <property type="match status" value="1"/>
</dbReference>
<dbReference type="Pfam" id="PF01783">
    <property type="entry name" value="Ribosomal_L32p"/>
    <property type="match status" value="1"/>
</dbReference>
<dbReference type="SUPFAM" id="SSF57829">
    <property type="entry name" value="Zn-binding ribosomal proteins"/>
    <property type="match status" value="1"/>
</dbReference>
<evidence type="ECO:0000255" key="1">
    <source>
        <dbReference type="HAMAP-Rule" id="MF_00340"/>
    </source>
</evidence>
<evidence type="ECO:0000256" key="2">
    <source>
        <dbReference type="SAM" id="MobiDB-lite"/>
    </source>
</evidence>
<evidence type="ECO:0000305" key="3"/>
<gene>
    <name evidence="1" type="primary">rpmF</name>
    <name evidence="1" type="synonym">rpl32</name>
    <name type="ordered locus">SYNPCC7002_A1893</name>
</gene>
<feature type="chain" id="PRO_1000120183" description="Large ribosomal subunit protein bL32">
    <location>
        <begin position="1"/>
        <end position="55"/>
    </location>
</feature>
<feature type="region of interest" description="Disordered" evidence="2">
    <location>
        <begin position="1"/>
        <end position="26"/>
    </location>
</feature>
<feature type="compositionally biased region" description="Basic residues" evidence="2">
    <location>
        <begin position="1"/>
        <end position="23"/>
    </location>
</feature>
<protein>
    <recommendedName>
        <fullName evidence="1">Large ribosomal subunit protein bL32</fullName>
    </recommendedName>
    <alternativeName>
        <fullName evidence="3">50S ribosomal protein L32</fullName>
    </alternativeName>
</protein>
<accession>B1XQI5</accession>
<sequence length="55" mass="6243">MAVPKKKTSKAKRDQRRAHWKRKATIEAQKALSLGKSVLTGRSSFVYPSPEDDEE</sequence>
<organism>
    <name type="scientific">Picosynechococcus sp. (strain ATCC 27264 / PCC 7002 / PR-6)</name>
    <name type="common">Agmenellum quadruplicatum</name>
    <dbReference type="NCBI Taxonomy" id="32049"/>
    <lineage>
        <taxon>Bacteria</taxon>
        <taxon>Bacillati</taxon>
        <taxon>Cyanobacteriota</taxon>
        <taxon>Cyanophyceae</taxon>
        <taxon>Oscillatoriophycideae</taxon>
        <taxon>Chroococcales</taxon>
        <taxon>Geminocystaceae</taxon>
        <taxon>Picosynechococcus</taxon>
    </lineage>
</organism>
<keyword id="KW-1185">Reference proteome</keyword>
<keyword id="KW-0687">Ribonucleoprotein</keyword>
<keyword id="KW-0689">Ribosomal protein</keyword>
<reference key="1">
    <citation type="submission" date="2008-02" db="EMBL/GenBank/DDBJ databases">
        <title>Complete sequence of Synechococcus sp. PCC 7002.</title>
        <authorList>
            <person name="Li T."/>
            <person name="Zhao J."/>
            <person name="Zhao C."/>
            <person name="Liu Z."/>
            <person name="Zhao F."/>
            <person name="Marquardt J."/>
            <person name="Nomura C.T."/>
            <person name="Persson S."/>
            <person name="Detter J.C."/>
            <person name="Richardson P.M."/>
            <person name="Lanz C."/>
            <person name="Schuster S.C."/>
            <person name="Wang J."/>
            <person name="Li S."/>
            <person name="Huang X."/>
            <person name="Cai T."/>
            <person name="Yu Z."/>
            <person name="Luo J."/>
            <person name="Zhao J."/>
            <person name="Bryant D.A."/>
        </authorList>
    </citation>
    <scope>NUCLEOTIDE SEQUENCE [LARGE SCALE GENOMIC DNA]</scope>
    <source>
        <strain>ATCC 27264 / PCC 7002 / PR-6</strain>
    </source>
</reference>
<name>RL32_PICP2</name>
<comment type="similarity">
    <text evidence="1">Belongs to the bacterial ribosomal protein bL32 family.</text>
</comment>
<proteinExistence type="inferred from homology"/>